<organism>
    <name type="scientific">Kluyveromyces lactis (strain ATCC 8585 / CBS 2359 / DSM 70799 / NBRC 1267 / NRRL Y-1140 / WM37)</name>
    <name type="common">Yeast</name>
    <name type="synonym">Candida sphaerica</name>
    <dbReference type="NCBI Taxonomy" id="284590"/>
    <lineage>
        <taxon>Eukaryota</taxon>
        <taxon>Fungi</taxon>
        <taxon>Dikarya</taxon>
        <taxon>Ascomycota</taxon>
        <taxon>Saccharomycotina</taxon>
        <taxon>Saccharomycetes</taxon>
        <taxon>Saccharomycetales</taxon>
        <taxon>Saccharomycetaceae</taxon>
        <taxon>Kluyveromyces</taxon>
    </lineage>
</organism>
<protein>
    <recommendedName>
        <fullName>Transcription activator of gluconeogenesis ERT1</fullName>
    </recommendedName>
</protein>
<feature type="chain" id="PRO_0000406462" description="Transcription activator of gluconeogenesis ERT1">
    <location>
        <begin position="1"/>
        <end position="507"/>
    </location>
</feature>
<feature type="domain" description="PAS" evidence="2">
    <location>
        <begin position="379"/>
        <end position="451"/>
    </location>
</feature>
<feature type="DNA-binding region" description="Zn(2)-C6 fungal-type" evidence="3">
    <location>
        <begin position="13"/>
        <end position="41"/>
    </location>
</feature>
<feature type="region of interest" description="Disordered" evidence="4">
    <location>
        <begin position="95"/>
        <end position="121"/>
    </location>
</feature>
<feature type="compositionally biased region" description="Polar residues" evidence="4">
    <location>
        <begin position="97"/>
        <end position="121"/>
    </location>
</feature>
<gene>
    <name type="primary">ERT1</name>
    <name type="ordered locus">KLLA0F10417g</name>
</gene>
<sequence>MSVKRNKKVSVACVHCAKSHVTCDDNRPCTRCIRKGLEESCIDAPRKKVKYLRDVPEDQLPSVLRSTKQVPPVNAVKLKMEPGILPNIPLDYDGGTIRQSAPANNGKNNPETQQTLSNGQITHRPKFLSSAADLEYSILSDIIHGDSLFNKIPVNFLYSNPTEKTPSPINQGSLNGQQDLHFSLQLRSKPMNQIRGNTRAIYSNLLGPVSHEILQSEFNLYTNHFPLQPQESLDGTLDFKRMTIGTLSPHLTKFDKTINQYYLNFANTFPEIYDSRKIPNLSYALEVEPPEYREIPHDTEIPHTLRFTTPSEIYSLVQTAFPSTTGFHALLRYLKRRFDKNQLVEMCRCLAELRPIFIASTIDLTDEDMIFMEKSHQRTLLEYEKFISQVGTPTCVWRRNGQISYVNDEFSLLTGWNRLELLNKMTFIVELMDGDTVMEYFQTFTRVAYQGFRGAETMRICNLLTPIKGSVIKCCCLWTLKRDAFGLPMMIIGNFMPILTLPEDVGF</sequence>
<keyword id="KW-0010">Activator</keyword>
<keyword id="KW-0238">DNA-binding</keyword>
<keyword id="KW-0312">Gluconeogenesis</keyword>
<keyword id="KW-0479">Metal-binding</keyword>
<keyword id="KW-0539">Nucleus</keyword>
<keyword id="KW-1185">Reference proteome</keyword>
<keyword id="KW-0804">Transcription</keyword>
<keyword id="KW-0805">Transcription regulation</keyword>
<keyword id="KW-0862">Zinc</keyword>
<name>ERT1_KLULA</name>
<proteinExistence type="inferred from homology"/>
<evidence type="ECO:0000250" key="1"/>
<evidence type="ECO:0000255" key="2">
    <source>
        <dbReference type="PROSITE-ProRule" id="PRU00140"/>
    </source>
</evidence>
<evidence type="ECO:0000255" key="3">
    <source>
        <dbReference type="PROSITE-ProRule" id="PRU00227"/>
    </source>
</evidence>
<evidence type="ECO:0000256" key="4">
    <source>
        <dbReference type="SAM" id="MobiDB-lite"/>
    </source>
</evidence>
<evidence type="ECO:0000305" key="5"/>
<accession>Q6CKI5</accession>
<dbReference type="EMBL" id="CR382126">
    <property type="protein sequence ID" value="CAG98262.1"/>
    <property type="molecule type" value="Genomic_DNA"/>
</dbReference>
<dbReference type="RefSeq" id="XP_455554.1">
    <property type="nucleotide sequence ID" value="XM_455554.1"/>
</dbReference>
<dbReference type="FunCoup" id="Q6CKI5">
    <property type="interactions" value="275"/>
</dbReference>
<dbReference type="PaxDb" id="284590-Q6CKI5"/>
<dbReference type="KEGG" id="kla:KLLA0_F10417g"/>
<dbReference type="eggNOG" id="ENOG502R1M5">
    <property type="taxonomic scope" value="Eukaryota"/>
</dbReference>
<dbReference type="HOGENOM" id="CLU_010748_2_3_1"/>
<dbReference type="InParanoid" id="Q6CKI5"/>
<dbReference type="OMA" id="VMTTCKL"/>
<dbReference type="Proteomes" id="UP000000598">
    <property type="component" value="Chromosome F"/>
</dbReference>
<dbReference type="GO" id="GO:0005634">
    <property type="term" value="C:nucleus"/>
    <property type="evidence" value="ECO:0007669"/>
    <property type="project" value="UniProtKB-SubCell"/>
</dbReference>
<dbReference type="GO" id="GO:0000981">
    <property type="term" value="F:DNA-binding transcription factor activity, RNA polymerase II-specific"/>
    <property type="evidence" value="ECO:0007669"/>
    <property type="project" value="InterPro"/>
</dbReference>
<dbReference type="GO" id="GO:0000977">
    <property type="term" value="F:RNA polymerase II transcription regulatory region sequence-specific DNA binding"/>
    <property type="evidence" value="ECO:0007669"/>
    <property type="project" value="TreeGrafter"/>
</dbReference>
<dbReference type="GO" id="GO:0008270">
    <property type="term" value="F:zinc ion binding"/>
    <property type="evidence" value="ECO:0007669"/>
    <property type="project" value="InterPro"/>
</dbReference>
<dbReference type="GO" id="GO:0009267">
    <property type="term" value="P:cellular response to starvation"/>
    <property type="evidence" value="ECO:0007669"/>
    <property type="project" value="TreeGrafter"/>
</dbReference>
<dbReference type="GO" id="GO:0006094">
    <property type="term" value="P:gluconeogenesis"/>
    <property type="evidence" value="ECO:0007669"/>
    <property type="project" value="UniProtKB-KW"/>
</dbReference>
<dbReference type="CDD" id="cd00067">
    <property type="entry name" value="GAL4"/>
    <property type="match status" value="1"/>
</dbReference>
<dbReference type="CDD" id="cd00130">
    <property type="entry name" value="PAS"/>
    <property type="match status" value="1"/>
</dbReference>
<dbReference type="Gene3D" id="4.10.240.10">
    <property type="entry name" value="Zn(2)-C6 fungal-type DNA-binding domain"/>
    <property type="match status" value="1"/>
</dbReference>
<dbReference type="InterPro" id="IPR050335">
    <property type="entry name" value="ERT1_acuK_gluconeogen_tf"/>
</dbReference>
<dbReference type="InterPro" id="IPR000014">
    <property type="entry name" value="PAS"/>
</dbReference>
<dbReference type="InterPro" id="IPR035965">
    <property type="entry name" value="PAS-like_dom_sf"/>
</dbReference>
<dbReference type="InterPro" id="IPR056751">
    <property type="entry name" value="PAS_13"/>
</dbReference>
<dbReference type="InterPro" id="IPR036864">
    <property type="entry name" value="Zn2-C6_fun-type_DNA-bd_sf"/>
</dbReference>
<dbReference type="InterPro" id="IPR001138">
    <property type="entry name" value="Zn2Cys6_DnaBD"/>
</dbReference>
<dbReference type="PANTHER" id="PTHR47659:SF1">
    <property type="entry name" value="TRANSCRIPTION ACTIVATOR OF GLUCONEOGENESIS ERT1"/>
    <property type="match status" value="1"/>
</dbReference>
<dbReference type="PANTHER" id="PTHR47659">
    <property type="entry name" value="ZN(II)2CYS6 TRANSCRIPTION FACTOR (EUROFUNG)-RELATED"/>
    <property type="match status" value="1"/>
</dbReference>
<dbReference type="Pfam" id="PF24990">
    <property type="entry name" value="PAS_13"/>
    <property type="match status" value="2"/>
</dbReference>
<dbReference type="Pfam" id="PF00172">
    <property type="entry name" value="Zn_clus"/>
    <property type="match status" value="1"/>
</dbReference>
<dbReference type="SMART" id="SM00066">
    <property type="entry name" value="GAL4"/>
    <property type="match status" value="1"/>
</dbReference>
<dbReference type="SUPFAM" id="SSF55785">
    <property type="entry name" value="PYP-like sensor domain (PAS domain)"/>
    <property type="match status" value="1"/>
</dbReference>
<dbReference type="SUPFAM" id="SSF57701">
    <property type="entry name" value="Zn2/Cys6 DNA-binding domain"/>
    <property type="match status" value="1"/>
</dbReference>
<dbReference type="PROSITE" id="PS50112">
    <property type="entry name" value="PAS"/>
    <property type="match status" value="1"/>
</dbReference>
<dbReference type="PROSITE" id="PS00463">
    <property type="entry name" value="ZN2_CY6_FUNGAL_1"/>
    <property type="match status" value="1"/>
</dbReference>
<dbReference type="PROSITE" id="PS50048">
    <property type="entry name" value="ZN2_CY6_FUNGAL_2"/>
    <property type="match status" value="1"/>
</dbReference>
<comment type="function">
    <text evidence="1">Transcription factor which regulates nonfermentable carbon utilization. Activator of gluconeogenetic genes (By similarity).</text>
</comment>
<comment type="subcellular location">
    <subcellularLocation>
        <location evidence="3">Nucleus</location>
    </subcellularLocation>
</comment>
<comment type="similarity">
    <text evidence="5">Belongs to the ERT1/acuK family.</text>
</comment>
<reference key="1">
    <citation type="journal article" date="2004" name="Nature">
        <title>Genome evolution in yeasts.</title>
        <authorList>
            <person name="Dujon B."/>
            <person name="Sherman D."/>
            <person name="Fischer G."/>
            <person name="Durrens P."/>
            <person name="Casaregola S."/>
            <person name="Lafontaine I."/>
            <person name="de Montigny J."/>
            <person name="Marck C."/>
            <person name="Neuveglise C."/>
            <person name="Talla E."/>
            <person name="Goffard N."/>
            <person name="Frangeul L."/>
            <person name="Aigle M."/>
            <person name="Anthouard V."/>
            <person name="Babour A."/>
            <person name="Barbe V."/>
            <person name="Barnay S."/>
            <person name="Blanchin S."/>
            <person name="Beckerich J.-M."/>
            <person name="Beyne E."/>
            <person name="Bleykasten C."/>
            <person name="Boisrame A."/>
            <person name="Boyer J."/>
            <person name="Cattolico L."/>
            <person name="Confanioleri F."/>
            <person name="de Daruvar A."/>
            <person name="Despons L."/>
            <person name="Fabre E."/>
            <person name="Fairhead C."/>
            <person name="Ferry-Dumazet H."/>
            <person name="Groppi A."/>
            <person name="Hantraye F."/>
            <person name="Hennequin C."/>
            <person name="Jauniaux N."/>
            <person name="Joyet P."/>
            <person name="Kachouri R."/>
            <person name="Kerrest A."/>
            <person name="Koszul R."/>
            <person name="Lemaire M."/>
            <person name="Lesur I."/>
            <person name="Ma L."/>
            <person name="Muller H."/>
            <person name="Nicaud J.-M."/>
            <person name="Nikolski M."/>
            <person name="Oztas S."/>
            <person name="Ozier-Kalogeropoulos O."/>
            <person name="Pellenz S."/>
            <person name="Potier S."/>
            <person name="Richard G.-F."/>
            <person name="Straub M.-L."/>
            <person name="Suleau A."/>
            <person name="Swennen D."/>
            <person name="Tekaia F."/>
            <person name="Wesolowski-Louvel M."/>
            <person name="Westhof E."/>
            <person name="Wirth B."/>
            <person name="Zeniou-Meyer M."/>
            <person name="Zivanovic Y."/>
            <person name="Bolotin-Fukuhara M."/>
            <person name="Thierry A."/>
            <person name="Bouchier C."/>
            <person name="Caudron B."/>
            <person name="Scarpelli C."/>
            <person name="Gaillardin C."/>
            <person name="Weissenbach J."/>
            <person name="Wincker P."/>
            <person name="Souciet J.-L."/>
        </authorList>
    </citation>
    <scope>NUCLEOTIDE SEQUENCE [LARGE SCALE GENOMIC DNA]</scope>
    <source>
        <strain>ATCC 8585 / CBS 2359 / DSM 70799 / NBRC 1267 / NRRL Y-1140 / WM37</strain>
    </source>
</reference>